<sequence length="1323" mass="150120">MAHKGTESKEQIWPYKITIGICAMNRKATSKPMRAIMKKIIDFYGQWVDSFIFPEQVIINEPVENWPLCHCLVSFHSTEFPLEKAIAYVKLRNPYVINNLDRQYDLLDRRTVFKILSDNGIEHPRHGYVIRGRPNEPDTELVEHPDHIEVNGEVFNKPFVEKPISSEDHNVYIYYPSSVGGGSQRLFRKINNRSSWYSPKSEVRKEGSYIYEEFIPADGTDVKVYAVGPFYAHAEARKAPGLDGKVERDSDGKEVRYPVILSNKEKQIAKKIVLAFGQTVCGFDLLRANGKSYVCDVNGFSFVKTSTKYYEDTAKILGNQIVRHYAKSKNWRVPSDMPQPPILDLGLGDDPPMITTPSGKLAELRCVVAVIRHGDRTPKQKMKLIVTDQRFFALFEKYDGYKKHEIKMKKPNQLMEVLELARALVIEKQRDRHQILEKLREGTGEEEIHKSEHDLEVCEEEMKKWEQMRTVLEMYGHFSGINRKVQMKYLKERETKTSDEELRREGPALLLILKWGGELTTAGNMQAEALGRLFRTLYPGIRRTDGKSSPEDTQGLGFLRLHSTYRHDLKIYASDEGRVQTTAAAFAKGLLALEGELTPILMQMVKSANTDGLLDDDCQARLYQTELKRYLHKALQADRDFTPQDYLELNPNGLRAITAAMEFIKNPRKMCHEIAGYVEKMCGVIVEYSQTRPTGSTLYLQESMDLAQRRWNKELREFRRKNKHGEVEFDISKIPDIYDNIKYDMEHNPDLCINNEVEFERMYVCVKNMADIVVPQEYGIKTENKMVIAQRVCTPLLRKIRNDLHRCLENKESEETQTRLDPRASQGIATPFRHVRTRLYFTSESHIHTLMNLIRYGNLCSVDDKKWQRAMNFLSGVTEFNYMTQVVLMVYEDSRKENDEADTGPRFHIEILFSPGLYPCFLTEKERIYETRFNLSTNPKPATSSRSSGRESRDTNDSASSSTEGRRPSIEKVVTVVTPTQLSTPSVTNDDLSISSNAESTAAESTGLVNTTTKTHNDSEDDLNDVESVNLVALDELNNTTKAMADDGKTAKRQRSVTGAEKSMEEGDKPHGEWKGNGVAKSGSQISVGSNEMESNNESMETVGGGKGQWVKDLLDQTKRAMAMNSIREVEPPIVIPTPVPSTTTAVVEDEASERQSRSRRYFPYRFKHHTAQLLTGMSGGGVHMQNRLISTDVLTGKFGDHDNKKNSRKDFGAGTAVLSTAVIARSSSAPRLMTYESEDFSVGEIKRFWPPLRSLETLHDSINLSQFDGFLERLIKGALTPLPSPPKTPLPSALSCDAINKTPTQDEVEKVIGKLAPTSSTD</sequence>
<feature type="chain" id="PRO_0000315696" description="Inositol hexakisphosphate and diphosphoinositol-pentakisphosphate kinase">
    <location>
        <begin position="1"/>
        <end position="1323"/>
    </location>
</feature>
<feature type="region of interest" description="Polyphosphoinositide-binding domain" evidence="3">
    <location>
        <begin position="355"/>
        <end position="426"/>
    </location>
</feature>
<feature type="region of interest" description="Disordered" evidence="4">
    <location>
        <begin position="933"/>
        <end position="1022"/>
    </location>
</feature>
<feature type="region of interest" description="Disordered" evidence="4">
    <location>
        <begin position="1043"/>
        <end position="1107"/>
    </location>
</feature>
<feature type="region of interest" description="Disordered" evidence="4">
    <location>
        <begin position="1134"/>
        <end position="1155"/>
    </location>
</feature>
<feature type="compositionally biased region" description="Polar residues" evidence="4">
    <location>
        <begin position="933"/>
        <end position="947"/>
    </location>
</feature>
<feature type="compositionally biased region" description="Polar residues" evidence="4">
    <location>
        <begin position="977"/>
        <end position="992"/>
    </location>
</feature>
<feature type="compositionally biased region" description="Low complexity" evidence="4">
    <location>
        <begin position="993"/>
        <end position="1006"/>
    </location>
</feature>
<feature type="compositionally biased region" description="Basic and acidic residues" evidence="4">
    <location>
        <begin position="1062"/>
        <end position="1074"/>
    </location>
</feature>
<feature type="compositionally biased region" description="Low complexity" evidence="4">
    <location>
        <begin position="1090"/>
        <end position="1101"/>
    </location>
</feature>
<feature type="binding site" evidence="1">
    <location>
        <begin position="26"/>
        <end position="27"/>
    </location>
    <ligand>
        <name>substrate</name>
    </ligand>
</feature>
<feature type="binding site" evidence="1">
    <location>
        <position position="109"/>
    </location>
    <ligand>
        <name>ATP</name>
        <dbReference type="ChEBI" id="CHEBI:30616"/>
    </ligand>
</feature>
<feature type="binding site" evidence="1">
    <location>
        <position position="162"/>
    </location>
    <ligand>
        <name>ATP</name>
        <dbReference type="ChEBI" id="CHEBI:30616"/>
    </ligand>
</feature>
<feature type="binding site" evidence="1">
    <location>
        <position position="169"/>
    </location>
    <ligand>
        <name>ATP</name>
        <dbReference type="ChEBI" id="CHEBI:30616"/>
    </ligand>
</feature>
<feature type="binding site" evidence="1">
    <location>
        <begin position="188"/>
        <end position="189"/>
    </location>
    <ligand>
        <name>substrate</name>
    </ligand>
</feature>
<feature type="binding site" evidence="1">
    <location>
        <position position="188"/>
    </location>
    <ligand>
        <name>ATP</name>
        <dbReference type="ChEBI" id="CHEBI:30616"/>
    </ligand>
</feature>
<feature type="binding site" evidence="1">
    <location>
        <begin position="212"/>
        <end position="215"/>
    </location>
    <ligand>
        <name>ATP</name>
        <dbReference type="ChEBI" id="CHEBI:30616"/>
    </ligand>
</feature>
<feature type="binding site" evidence="1">
    <location>
        <begin position="221"/>
        <end position="223"/>
    </location>
    <ligand>
        <name>ATP</name>
        <dbReference type="ChEBI" id="CHEBI:30616"/>
    </ligand>
</feature>
<feature type="binding site" evidence="1">
    <location>
        <position position="223"/>
    </location>
    <ligand>
        <name>substrate</name>
    </ligand>
</feature>
<feature type="binding site" evidence="1">
    <location>
        <position position="237"/>
    </location>
    <ligand>
        <name>substrate</name>
    </ligand>
</feature>
<feature type="binding site" evidence="1">
    <location>
        <position position="284"/>
    </location>
    <ligand>
        <name>ATP</name>
        <dbReference type="ChEBI" id="CHEBI:30616"/>
    </ligand>
</feature>
<feature type="binding site" evidence="1">
    <location>
        <begin position="296"/>
        <end position="298"/>
    </location>
    <ligand>
        <name>ATP</name>
        <dbReference type="ChEBI" id="CHEBI:30616"/>
    </ligand>
</feature>
<feature type="binding site" evidence="1">
    <location>
        <begin position="301"/>
        <end position="304"/>
    </location>
    <ligand>
        <name>substrate</name>
    </ligand>
</feature>
<feature type="splice variant" id="VSP_030639" description="In isoform b." evidence="5">
    <original>MADDGKTAKRQRSVTGAEKSMEEGDKPHGEWKGNGVAKSGSQISVGSNEMESNNESMETVGGGKGQWVKDLLDQTKRAMAMNSIREVEPPIVIPTPVPSTTTAVVEDEASERQSRS</original>
    <variation>SQRGSFHVTEPIQIDEKT</variation>
    <location>
        <begin position="1044"/>
        <end position="1159"/>
    </location>
</feature>
<reference key="1">
    <citation type="journal article" date="1998" name="Science">
        <title>Genome sequence of the nematode C. elegans: a platform for investigating biology.</title>
        <authorList>
            <consortium name="The C. elegans sequencing consortium"/>
        </authorList>
    </citation>
    <scope>NUCLEOTIDE SEQUENCE [LARGE SCALE GENOMIC DNA]</scope>
    <scope>ALTERNATIVE SPLICING</scope>
    <source>
        <strain>Bristol N2</strain>
    </source>
</reference>
<proteinExistence type="inferred from homology"/>
<gene>
    <name type="ORF">F46F11.1</name>
</gene>
<accession>P91309</accession>
<accession>Q8T3B4</accession>
<evidence type="ECO:0000250" key="1">
    <source>
        <dbReference type="UniProtKB" id="O43314"/>
    </source>
</evidence>
<evidence type="ECO:0000250" key="2">
    <source>
        <dbReference type="UniProtKB" id="O74429"/>
    </source>
</evidence>
<evidence type="ECO:0000250" key="3">
    <source>
        <dbReference type="UniProtKB" id="Q6PFW1"/>
    </source>
</evidence>
<evidence type="ECO:0000256" key="4">
    <source>
        <dbReference type="SAM" id="MobiDB-lite"/>
    </source>
</evidence>
<evidence type="ECO:0000305" key="5"/>
<protein>
    <recommendedName>
        <fullName evidence="5">Inositol hexakisphosphate and diphosphoinositol-pentakisphosphate kinase</fullName>
        <ecNumber evidence="3">2.7.4.24</ecNumber>
    </recommendedName>
    <alternativeName>
        <fullName>InsP6 and PP-IP5 kinase</fullName>
    </alternativeName>
</protein>
<comment type="function">
    <text evidence="3">Bifunctional inositol kinase that acts in concert with the IP6K kinases to synthesize the diphosphate group-containing inositol pyrophosphates diphosphoinositol pentakisphosphate, PP-InsP5, and bis-diphosphoinositol tetrakisphosphate, (PP)2-InsP4. PP-InsP5 and (PP)2-InsP4, also respectively called InsP7 and InsP8, may regulate a variety of cellular processes, including apoptosis, vesicle trafficking, cytoskeletal dynamics, and exocytosis. Phosphorylates inositol hexakisphosphate (InsP6) at position 1 to produce PP-InsP5 which is in turn phosphorylated by IP6Ks to produce (PP)2-InsP4. Alternatively, phosphorylates PP-InsP5 at position 1, produced by IP6Ks from InsP6, to produce (PP)2-InsP4.</text>
</comment>
<comment type="catalytic activity">
    <reaction evidence="3">
        <text>1D-myo-inositol hexakisphosphate + ATP = 1-diphospho-1D-myo-inositol 2,3,4,5,6-pentakisphosphate + ADP</text>
        <dbReference type="Rhea" id="RHEA:37459"/>
        <dbReference type="ChEBI" id="CHEBI:30616"/>
        <dbReference type="ChEBI" id="CHEBI:58130"/>
        <dbReference type="ChEBI" id="CHEBI:74946"/>
        <dbReference type="ChEBI" id="CHEBI:456216"/>
        <dbReference type="EC" id="2.7.4.24"/>
    </reaction>
    <physiologicalReaction direction="left-to-right" evidence="3">
        <dbReference type="Rhea" id="RHEA:37460"/>
    </physiologicalReaction>
</comment>
<comment type="catalytic activity">
    <reaction evidence="3">
        <text>5-diphospho-1D-myo-inositol 1,2,3,4,6-pentakisphosphate + ATP + H(+) = 1,5-bis(diphospho)-1D-myo-inositol 2,3,4,6-tetrakisphosphate + ADP</text>
        <dbReference type="Rhea" id="RHEA:10276"/>
        <dbReference type="ChEBI" id="CHEBI:15378"/>
        <dbReference type="ChEBI" id="CHEBI:30616"/>
        <dbReference type="ChEBI" id="CHEBI:58628"/>
        <dbReference type="ChEBI" id="CHEBI:77983"/>
        <dbReference type="ChEBI" id="CHEBI:456216"/>
        <dbReference type="EC" id="2.7.4.24"/>
    </reaction>
    <physiologicalReaction direction="left-to-right" evidence="3">
        <dbReference type="Rhea" id="RHEA:10277"/>
    </physiologicalReaction>
</comment>
<comment type="subcellular location">
    <subcellularLocation>
        <location evidence="3">Cytoplasm</location>
        <location evidence="3">Cytosol</location>
    </subcellularLocation>
</comment>
<comment type="alternative products">
    <event type="alternative splicing"/>
    <isoform>
        <id>P91309-1</id>
        <name>a</name>
        <sequence type="displayed"/>
    </isoform>
    <isoform>
        <id>P91309-2</id>
        <name>b</name>
        <sequence type="described" ref="VSP_030639"/>
    </isoform>
</comment>
<comment type="domain">
    <text evidence="2">The N-terminal kinase domain produces inositol polyphosphates. The C-terminal acid phosphatase-like domain binds inositol polyphosphates and negatively regulates their accumulation. The C-terminal domain reduces the amount of inositol pyrophosphates in a dose-dependent manner in vitro.</text>
</comment>
<comment type="similarity">
    <text evidence="5">Belongs to the histidine acid phosphatase family. VIP1 subfamily.</text>
</comment>
<comment type="caution">
    <text evidence="5">Although related to histidine acid phosphatases, it lacks the conserved active sites, suggesting that it has no phosphatase activity.</text>
</comment>
<name>VIP1_CAEEL</name>
<organism>
    <name type="scientific">Caenorhabditis elegans</name>
    <dbReference type="NCBI Taxonomy" id="6239"/>
    <lineage>
        <taxon>Eukaryota</taxon>
        <taxon>Metazoa</taxon>
        <taxon>Ecdysozoa</taxon>
        <taxon>Nematoda</taxon>
        <taxon>Chromadorea</taxon>
        <taxon>Rhabditida</taxon>
        <taxon>Rhabditina</taxon>
        <taxon>Rhabditomorpha</taxon>
        <taxon>Rhabditoidea</taxon>
        <taxon>Rhabditidae</taxon>
        <taxon>Peloderinae</taxon>
        <taxon>Caenorhabditis</taxon>
    </lineage>
</organism>
<keyword id="KW-0025">Alternative splicing</keyword>
<keyword id="KW-0067">ATP-binding</keyword>
<keyword id="KW-0963">Cytoplasm</keyword>
<keyword id="KW-0418">Kinase</keyword>
<keyword id="KW-0547">Nucleotide-binding</keyword>
<keyword id="KW-1185">Reference proteome</keyword>
<keyword id="KW-0808">Transferase</keyword>
<dbReference type="EC" id="2.7.4.24" evidence="3"/>
<dbReference type="EMBL" id="FO081396">
    <property type="protein sequence ID" value="CCD71324.1"/>
    <property type="molecule type" value="Genomic_DNA"/>
</dbReference>
<dbReference type="EMBL" id="FO081396">
    <property type="protein sequence ID" value="CCD71335.1"/>
    <property type="molecule type" value="Genomic_DNA"/>
</dbReference>
<dbReference type="RefSeq" id="NP_740855.2">
    <molecule id="P91309-1"/>
    <property type="nucleotide sequence ID" value="NM_170868.6"/>
</dbReference>
<dbReference type="RefSeq" id="NP_740856.1">
    <molecule id="P91309-2"/>
    <property type="nucleotide sequence ID" value="NM_171837.9"/>
</dbReference>
<dbReference type="SMR" id="P91309"/>
<dbReference type="BioGRID" id="37679">
    <property type="interactions" value="5"/>
</dbReference>
<dbReference type="FunCoup" id="P91309">
    <property type="interactions" value="2547"/>
</dbReference>
<dbReference type="STRING" id="6239.F46F11.1a.1"/>
<dbReference type="PaxDb" id="6239-F46F11.1a"/>
<dbReference type="PeptideAtlas" id="P91309"/>
<dbReference type="EnsemblMetazoa" id="F46F11.1a.1">
    <molecule id="P91309-1"/>
    <property type="protein sequence ID" value="F46F11.1a.1"/>
    <property type="gene ID" value="WBGene00018508"/>
</dbReference>
<dbReference type="EnsemblMetazoa" id="F46F11.1b.1">
    <molecule id="P91309-2"/>
    <property type="protein sequence ID" value="F46F11.1b.1"/>
    <property type="gene ID" value="WBGene00018508"/>
</dbReference>
<dbReference type="GeneID" id="172221"/>
<dbReference type="KEGG" id="cel:CELE_F46F11.1"/>
<dbReference type="UCSC" id="F46F11.1b">
    <molecule id="P91309-1"/>
    <property type="organism name" value="c. elegans"/>
</dbReference>
<dbReference type="AGR" id="WB:WBGene00018508"/>
<dbReference type="CTD" id="172221"/>
<dbReference type="WormBase" id="F46F11.1a">
    <molecule id="P91309-1"/>
    <property type="protein sequence ID" value="CE41904"/>
    <property type="gene ID" value="WBGene00018508"/>
</dbReference>
<dbReference type="WormBase" id="F46F11.1b">
    <molecule id="P91309-2"/>
    <property type="protein sequence ID" value="CE30534"/>
    <property type="gene ID" value="WBGene00018508"/>
</dbReference>
<dbReference type="eggNOG" id="KOG1057">
    <property type="taxonomic scope" value="Eukaryota"/>
</dbReference>
<dbReference type="GeneTree" id="ENSGT00390000009048"/>
<dbReference type="InParanoid" id="P91309"/>
<dbReference type="OMA" id="IQERWCC"/>
<dbReference type="OrthoDB" id="18042at2759"/>
<dbReference type="PhylomeDB" id="P91309"/>
<dbReference type="Reactome" id="R-CEL-1855167">
    <property type="pathway name" value="Synthesis of pyrophosphates in the cytosol"/>
</dbReference>
<dbReference type="PRO" id="PR:P91309"/>
<dbReference type="Proteomes" id="UP000001940">
    <property type="component" value="Chromosome I"/>
</dbReference>
<dbReference type="Bgee" id="WBGene00018508">
    <property type="expression patterns" value="Expressed in pharyngeal muscle cell (C elegans) and 4 other cell types or tissues"/>
</dbReference>
<dbReference type="GO" id="GO:0005737">
    <property type="term" value="C:cytoplasm"/>
    <property type="evidence" value="ECO:0007005"/>
    <property type="project" value="WormBase"/>
</dbReference>
<dbReference type="GO" id="GO:0005829">
    <property type="term" value="C:cytosol"/>
    <property type="evidence" value="ECO:0000250"/>
    <property type="project" value="UniProtKB"/>
</dbReference>
<dbReference type="GO" id="GO:0033857">
    <property type="term" value="F:5-diphosphoinositol pentakisphosphate 1-kinase activity"/>
    <property type="evidence" value="ECO:0000250"/>
    <property type="project" value="UniProtKB"/>
</dbReference>
<dbReference type="GO" id="GO:0005524">
    <property type="term" value="F:ATP binding"/>
    <property type="evidence" value="ECO:0000250"/>
    <property type="project" value="UniProtKB"/>
</dbReference>
<dbReference type="GO" id="GO:0052723">
    <property type="term" value="F:inositol hexakisphosphate 1-kinase activity"/>
    <property type="evidence" value="ECO:0007669"/>
    <property type="project" value="RHEA"/>
</dbReference>
<dbReference type="GO" id="GO:0000832">
    <property type="term" value="F:inositol hexakisphosphate 5-kinase activity"/>
    <property type="evidence" value="ECO:0000250"/>
    <property type="project" value="UniProtKB"/>
</dbReference>
<dbReference type="GO" id="GO:0000828">
    <property type="term" value="F:inositol hexakisphosphate kinase activity"/>
    <property type="evidence" value="ECO:0000318"/>
    <property type="project" value="GO_Central"/>
</dbReference>
<dbReference type="GO" id="GO:0000827">
    <property type="term" value="F:inositol-1,3,4,5,6-pentakisphosphate kinase activity"/>
    <property type="evidence" value="ECO:0000250"/>
    <property type="project" value="UniProtKB"/>
</dbReference>
<dbReference type="GO" id="GO:0006020">
    <property type="term" value="P:inositol metabolic process"/>
    <property type="evidence" value="ECO:0000250"/>
    <property type="project" value="UniProtKB"/>
</dbReference>
<dbReference type="GO" id="GO:0032958">
    <property type="term" value="P:inositol phosphate biosynthetic process"/>
    <property type="evidence" value="ECO:0000318"/>
    <property type="project" value="GO_Central"/>
</dbReference>
<dbReference type="CDD" id="cd07061">
    <property type="entry name" value="HP_HAP_like"/>
    <property type="match status" value="1"/>
</dbReference>
<dbReference type="FunFam" id="3.30.470.20:FF:000003">
    <property type="entry name" value="Inositol hexakisphosphate and diphosphoinositol-pentakisphosphate kinase"/>
    <property type="match status" value="1"/>
</dbReference>
<dbReference type="Gene3D" id="3.40.50.11950">
    <property type="match status" value="1"/>
</dbReference>
<dbReference type="Gene3D" id="3.30.470.20">
    <property type="entry name" value="ATP-grasp fold, B domain"/>
    <property type="match status" value="1"/>
</dbReference>
<dbReference type="Gene3D" id="3.40.50.1240">
    <property type="entry name" value="Phosphoglycerate mutase-like"/>
    <property type="match status" value="1"/>
</dbReference>
<dbReference type="InterPro" id="IPR033379">
    <property type="entry name" value="Acid_Pase_AS"/>
</dbReference>
<dbReference type="InterPro" id="IPR000560">
    <property type="entry name" value="His_Pase_clade-2"/>
</dbReference>
<dbReference type="InterPro" id="IPR037446">
    <property type="entry name" value="His_Pase_VIP1"/>
</dbReference>
<dbReference type="InterPro" id="IPR029033">
    <property type="entry name" value="His_PPase_superfam"/>
</dbReference>
<dbReference type="InterPro" id="IPR040557">
    <property type="entry name" value="VIP1_N"/>
</dbReference>
<dbReference type="PANTHER" id="PTHR12750">
    <property type="entry name" value="DIPHOSPHOINOSITOL PENTAKISPHOSPHATE KINASE"/>
    <property type="match status" value="1"/>
</dbReference>
<dbReference type="PANTHER" id="PTHR12750:SF9">
    <property type="entry name" value="INOSITOL HEXAKISPHOSPHATE AND DIPHOSPHOINOSITOL-PENTAKISPHOSPHATE KINASE"/>
    <property type="match status" value="1"/>
</dbReference>
<dbReference type="Pfam" id="PF00328">
    <property type="entry name" value="His_Phos_2"/>
    <property type="match status" value="1"/>
</dbReference>
<dbReference type="Pfam" id="PF18086">
    <property type="entry name" value="PPIP5K2_N"/>
    <property type="match status" value="1"/>
</dbReference>
<dbReference type="SUPFAM" id="SSF56059">
    <property type="entry name" value="Glutathione synthetase ATP-binding domain-like"/>
    <property type="match status" value="1"/>
</dbReference>
<dbReference type="SUPFAM" id="SSF53254">
    <property type="entry name" value="Phosphoglycerate mutase-like"/>
    <property type="match status" value="1"/>
</dbReference>
<dbReference type="PROSITE" id="PS00616">
    <property type="entry name" value="HIS_ACID_PHOSPHAT_1"/>
    <property type="match status" value="1"/>
</dbReference>